<feature type="chain" id="PRO_1000205720" description="Large ribosomal subunit protein bL20">
    <location>
        <begin position="1"/>
        <end position="118"/>
    </location>
</feature>
<reference key="1">
    <citation type="submission" date="2009-07" db="EMBL/GenBank/DDBJ databases">
        <title>Complete sequence of Pectobacterium carotovorum subsp. carotovorum PC1.</title>
        <authorList>
            <consortium name="US DOE Joint Genome Institute"/>
            <person name="Lucas S."/>
            <person name="Copeland A."/>
            <person name="Lapidus A."/>
            <person name="Glavina del Rio T."/>
            <person name="Tice H."/>
            <person name="Bruce D."/>
            <person name="Goodwin L."/>
            <person name="Pitluck S."/>
            <person name="Munk A.C."/>
            <person name="Brettin T."/>
            <person name="Detter J.C."/>
            <person name="Han C."/>
            <person name="Tapia R."/>
            <person name="Larimer F."/>
            <person name="Land M."/>
            <person name="Hauser L."/>
            <person name="Kyrpides N."/>
            <person name="Mikhailova N."/>
            <person name="Balakrishnan V."/>
            <person name="Glasner J."/>
            <person name="Perna N.T."/>
        </authorList>
    </citation>
    <scope>NUCLEOTIDE SEQUENCE [LARGE SCALE GENOMIC DNA]</scope>
    <source>
        <strain>PC1</strain>
    </source>
</reference>
<comment type="function">
    <text evidence="1">Binds directly to 23S ribosomal RNA and is necessary for the in vitro assembly process of the 50S ribosomal subunit. It is not involved in the protein synthesizing functions of that subunit.</text>
</comment>
<comment type="similarity">
    <text evidence="1">Belongs to the bacterial ribosomal protein bL20 family.</text>
</comment>
<dbReference type="EMBL" id="CP001657">
    <property type="protein sequence ID" value="ACT12932.1"/>
    <property type="molecule type" value="Genomic_DNA"/>
</dbReference>
<dbReference type="RefSeq" id="WP_005968887.1">
    <property type="nucleotide sequence ID" value="NC_012917.1"/>
</dbReference>
<dbReference type="SMR" id="C6DFY9"/>
<dbReference type="STRING" id="561230.PC1_1891"/>
<dbReference type="GeneID" id="93390135"/>
<dbReference type="KEGG" id="pct:PC1_1891"/>
<dbReference type="eggNOG" id="COG0292">
    <property type="taxonomic scope" value="Bacteria"/>
</dbReference>
<dbReference type="HOGENOM" id="CLU_123265_0_1_6"/>
<dbReference type="OrthoDB" id="9808966at2"/>
<dbReference type="Proteomes" id="UP000002736">
    <property type="component" value="Chromosome"/>
</dbReference>
<dbReference type="GO" id="GO:1990904">
    <property type="term" value="C:ribonucleoprotein complex"/>
    <property type="evidence" value="ECO:0007669"/>
    <property type="project" value="UniProtKB-KW"/>
</dbReference>
<dbReference type="GO" id="GO:0005840">
    <property type="term" value="C:ribosome"/>
    <property type="evidence" value="ECO:0007669"/>
    <property type="project" value="UniProtKB-KW"/>
</dbReference>
<dbReference type="GO" id="GO:0019843">
    <property type="term" value="F:rRNA binding"/>
    <property type="evidence" value="ECO:0007669"/>
    <property type="project" value="UniProtKB-UniRule"/>
</dbReference>
<dbReference type="GO" id="GO:0003735">
    <property type="term" value="F:structural constituent of ribosome"/>
    <property type="evidence" value="ECO:0007669"/>
    <property type="project" value="InterPro"/>
</dbReference>
<dbReference type="GO" id="GO:0000027">
    <property type="term" value="P:ribosomal large subunit assembly"/>
    <property type="evidence" value="ECO:0007669"/>
    <property type="project" value="UniProtKB-UniRule"/>
</dbReference>
<dbReference type="GO" id="GO:0006412">
    <property type="term" value="P:translation"/>
    <property type="evidence" value="ECO:0007669"/>
    <property type="project" value="InterPro"/>
</dbReference>
<dbReference type="CDD" id="cd07026">
    <property type="entry name" value="Ribosomal_L20"/>
    <property type="match status" value="1"/>
</dbReference>
<dbReference type="FunFam" id="1.10.1900.20:FF:000001">
    <property type="entry name" value="50S ribosomal protein L20"/>
    <property type="match status" value="1"/>
</dbReference>
<dbReference type="Gene3D" id="6.10.160.10">
    <property type="match status" value="1"/>
</dbReference>
<dbReference type="Gene3D" id="1.10.1900.20">
    <property type="entry name" value="Ribosomal protein L20"/>
    <property type="match status" value="1"/>
</dbReference>
<dbReference type="HAMAP" id="MF_00382">
    <property type="entry name" value="Ribosomal_bL20"/>
    <property type="match status" value="1"/>
</dbReference>
<dbReference type="InterPro" id="IPR005813">
    <property type="entry name" value="Ribosomal_bL20"/>
</dbReference>
<dbReference type="InterPro" id="IPR049946">
    <property type="entry name" value="RIBOSOMAL_L20_CS"/>
</dbReference>
<dbReference type="InterPro" id="IPR035566">
    <property type="entry name" value="Ribosomal_protein_bL20_C"/>
</dbReference>
<dbReference type="NCBIfam" id="TIGR01032">
    <property type="entry name" value="rplT_bact"/>
    <property type="match status" value="1"/>
</dbReference>
<dbReference type="PANTHER" id="PTHR10986">
    <property type="entry name" value="39S RIBOSOMAL PROTEIN L20"/>
    <property type="match status" value="1"/>
</dbReference>
<dbReference type="Pfam" id="PF00453">
    <property type="entry name" value="Ribosomal_L20"/>
    <property type="match status" value="1"/>
</dbReference>
<dbReference type="PRINTS" id="PR00062">
    <property type="entry name" value="RIBOSOMALL20"/>
</dbReference>
<dbReference type="SUPFAM" id="SSF74731">
    <property type="entry name" value="Ribosomal protein L20"/>
    <property type="match status" value="1"/>
</dbReference>
<dbReference type="PROSITE" id="PS00937">
    <property type="entry name" value="RIBOSOMAL_L20"/>
    <property type="match status" value="1"/>
</dbReference>
<organism>
    <name type="scientific">Pectobacterium carotovorum subsp. carotovorum (strain PC1)</name>
    <dbReference type="NCBI Taxonomy" id="561230"/>
    <lineage>
        <taxon>Bacteria</taxon>
        <taxon>Pseudomonadati</taxon>
        <taxon>Pseudomonadota</taxon>
        <taxon>Gammaproteobacteria</taxon>
        <taxon>Enterobacterales</taxon>
        <taxon>Pectobacteriaceae</taxon>
        <taxon>Pectobacterium</taxon>
    </lineage>
</organism>
<name>RL20_PECCP</name>
<proteinExistence type="inferred from homology"/>
<protein>
    <recommendedName>
        <fullName evidence="1">Large ribosomal subunit protein bL20</fullName>
    </recommendedName>
    <alternativeName>
        <fullName evidence="2">50S ribosomal protein L20</fullName>
    </alternativeName>
</protein>
<sequence>MARVKRGVVARARHKKILKQAKGYYGARSRVYRVAFQAVIKAGQYAYRDRRQRKRQFRQLWIARINAAARQNGLSYSKFINGLKKASVEIDRKILADIAVFDKLAFSALVEKAKAALA</sequence>
<accession>C6DFY9</accession>
<gene>
    <name evidence="1" type="primary">rplT</name>
    <name type="ordered locus">PC1_1891</name>
</gene>
<evidence type="ECO:0000255" key="1">
    <source>
        <dbReference type="HAMAP-Rule" id="MF_00382"/>
    </source>
</evidence>
<evidence type="ECO:0000305" key="2"/>
<keyword id="KW-0687">Ribonucleoprotein</keyword>
<keyword id="KW-0689">Ribosomal protein</keyword>
<keyword id="KW-0694">RNA-binding</keyword>
<keyword id="KW-0699">rRNA-binding</keyword>